<protein>
    <recommendedName>
        <fullName evidence="5">Formiminotransferase cyclodeaminase-like protein</fullName>
        <shortName evidence="5">AtFTCD-L</shortName>
        <ecNumber evidence="2">2.1.2.5</ecNumber>
    </recommendedName>
</protein>
<proteinExistence type="evidence at transcript level"/>
<organism>
    <name type="scientific">Arabidopsis thaliana</name>
    <name type="common">Mouse-ear cress</name>
    <dbReference type="NCBI Taxonomy" id="3702"/>
    <lineage>
        <taxon>Eukaryota</taxon>
        <taxon>Viridiplantae</taxon>
        <taxon>Streptophyta</taxon>
        <taxon>Embryophyta</taxon>
        <taxon>Tracheophyta</taxon>
        <taxon>Spermatophyta</taxon>
        <taxon>Magnoliopsida</taxon>
        <taxon>eudicotyledons</taxon>
        <taxon>Gunneridae</taxon>
        <taxon>Pentapetalae</taxon>
        <taxon>rosids</taxon>
        <taxon>malvids</taxon>
        <taxon>Brassicales</taxon>
        <taxon>Brassicaceae</taxon>
        <taxon>Camelineae</taxon>
        <taxon>Arabidopsis</taxon>
    </lineage>
</organism>
<dbReference type="EC" id="2.1.2.5" evidence="2"/>
<dbReference type="EMBL" id="AC006234">
    <property type="protein sequence ID" value="AAD20912.2"/>
    <property type="molecule type" value="Genomic_DNA"/>
</dbReference>
<dbReference type="EMBL" id="CP002685">
    <property type="protein sequence ID" value="AEC07083.1"/>
    <property type="molecule type" value="Genomic_DNA"/>
</dbReference>
<dbReference type="EMBL" id="CP002685">
    <property type="protein sequence ID" value="ANM62695.1"/>
    <property type="molecule type" value="Genomic_DNA"/>
</dbReference>
<dbReference type="EMBL" id="AF360255">
    <property type="protein sequence ID" value="AAK25965.1"/>
    <property type="molecule type" value="mRNA"/>
</dbReference>
<dbReference type="EMBL" id="AY040069">
    <property type="protein sequence ID" value="AAK64127.1"/>
    <property type="molecule type" value="mRNA"/>
</dbReference>
<dbReference type="PIR" id="H84593">
    <property type="entry name" value="H84593"/>
</dbReference>
<dbReference type="RefSeq" id="NP_001324836.1">
    <property type="nucleotide sequence ID" value="NM_001335708.1"/>
</dbReference>
<dbReference type="RefSeq" id="NP_565488.1">
    <property type="nucleotide sequence ID" value="NM_127651.4"/>
</dbReference>
<dbReference type="SMR" id="Q9SKT4"/>
<dbReference type="FunCoup" id="Q9SKT4">
    <property type="interactions" value="103"/>
</dbReference>
<dbReference type="ProteomicsDB" id="181518"/>
<dbReference type="DNASU" id="816615"/>
<dbReference type="EnsemblPlants" id="AT2G20830.1">
    <property type="protein sequence ID" value="AT2G20830.1"/>
    <property type="gene ID" value="AT2G20830"/>
</dbReference>
<dbReference type="EnsemblPlants" id="AT2G20830.4">
    <property type="protein sequence ID" value="AT2G20830.4"/>
    <property type="gene ID" value="AT2G20830"/>
</dbReference>
<dbReference type="GeneID" id="816615"/>
<dbReference type="Gramene" id="AT2G20830.1">
    <property type="protein sequence ID" value="AT2G20830.1"/>
    <property type="gene ID" value="AT2G20830"/>
</dbReference>
<dbReference type="Gramene" id="AT2G20830.4">
    <property type="protein sequence ID" value="AT2G20830.4"/>
    <property type="gene ID" value="AT2G20830"/>
</dbReference>
<dbReference type="KEGG" id="ath:AT2G20830"/>
<dbReference type="Araport" id="AT2G20830"/>
<dbReference type="TAIR" id="AT2G20830"/>
<dbReference type="HOGENOM" id="CLU_052578_0_0_1"/>
<dbReference type="UniPathway" id="UPA00193"/>
<dbReference type="PRO" id="PR:Q9SKT4"/>
<dbReference type="Proteomes" id="UP000006548">
    <property type="component" value="Chromosome 2"/>
</dbReference>
<dbReference type="ExpressionAtlas" id="Q9SKT4">
    <property type="expression patterns" value="baseline and differential"/>
</dbReference>
<dbReference type="GO" id="GO:0005794">
    <property type="term" value="C:Golgi apparatus"/>
    <property type="evidence" value="ECO:0007669"/>
    <property type="project" value="UniProtKB-SubCell"/>
</dbReference>
<dbReference type="GO" id="GO:0005542">
    <property type="term" value="F:folic acid binding"/>
    <property type="evidence" value="ECO:0007669"/>
    <property type="project" value="InterPro"/>
</dbReference>
<dbReference type="GO" id="GO:0016740">
    <property type="term" value="F:transferase activity"/>
    <property type="evidence" value="ECO:0007669"/>
    <property type="project" value="UniProtKB-KW"/>
</dbReference>
<dbReference type="GO" id="GO:0048364">
    <property type="term" value="P:root development"/>
    <property type="evidence" value="ECO:0000315"/>
    <property type="project" value="UniProtKB"/>
</dbReference>
<dbReference type="GO" id="GO:0046903">
    <property type="term" value="P:secretion"/>
    <property type="evidence" value="ECO:0000315"/>
    <property type="project" value="UniProtKB"/>
</dbReference>
<dbReference type="GO" id="GO:0035999">
    <property type="term" value="P:tetrahydrofolate interconversion"/>
    <property type="evidence" value="ECO:0007669"/>
    <property type="project" value="UniProtKB-UniPathway"/>
</dbReference>
<dbReference type="Gene3D" id="3.30.70.670">
    <property type="entry name" value="Formiminotransferase, C-terminal subdomain"/>
    <property type="match status" value="1"/>
</dbReference>
<dbReference type="Gene3D" id="3.30.990.10">
    <property type="entry name" value="Formiminotransferase, N-terminal subdomain"/>
    <property type="match status" value="1"/>
</dbReference>
<dbReference type="InterPro" id="IPR013802">
    <property type="entry name" value="Formiminotransferase_C"/>
</dbReference>
<dbReference type="InterPro" id="IPR037070">
    <property type="entry name" value="Formiminotransferase_C_sf"/>
</dbReference>
<dbReference type="InterPro" id="IPR012886">
    <property type="entry name" value="Formiminotransferase_N"/>
</dbReference>
<dbReference type="InterPro" id="IPR037064">
    <property type="entry name" value="Formiminotransferase_N_sf"/>
</dbReference>
<dbReference type="InterPro" id="IPR022384">
    <property type="entry name" value="FormiminoTrfase_cat_dom_sf"/>
</dbReference>
<dbReference type="InterPro" id="IPR051623">
    <property type="entry name" value="FTCD"/>
</dbReference>
<dbReference type="PANTHER" id="PTHR12234:SF1">
    <property type="entry name" value="FORMIMINOTRANSFERASE N-TERMINAL SUBDOMAIN-CONTAINING PROTEIN"/>
    <property type="match status" value="1"/>
</dbReference>
<dbReference type="PANTHER" id="PTHR12234">
    <property type="entry name" value="FORMIMINOTRANSFERASE-CYCLODEAMINASE"/>
    <property type="match status" value="1"/>
</dbReference>
<dbReference type="Pfam" id="PF07837">
    <property type="entry name" value="FTCD_N"/>
    <property type="match status" value="1"/>
</dbReference>
<dbReference type="SMART" id="SM01221">
    <property type="entry name" value="FTCD"/>
    <property type="match status" value="1"/>
</dbReference>
<dbReference type="SMART" id="SM01222">
    <property type="entry name" value="FTCD_N"/>
    <property type="match status" value="1"/>
</dbReference>
<dbReference type="SUPFAM" id="SSF55116">
    <property type="entry name" value="Formiminotransferase domain of formiminotransferase-cyclodeaminase"/>
    <property type="match status" value="1"/>
</dbReference>
<gene>
    <name evidence="5" type="primary">FTCD-L</name>
    <name evidence="7" type="ordered locus">At2g20830</name>
    <name evidence="8" type="ORF">F5H14.20</name>
</gene>
<feature type="chain" id="PRO_0000457415" description="Formiminotransferase cyclodeaminase-like protein">
    <location>
        <begin position="1"/>
        <end position="297"/>
    </location>
</feature>
<feature type="region of interest" description="Formiminotransferase N-subdomain" evidence="1">
    <location>
        <begin position="2"/>
        <end position="196"/>
    </location>
</feature>
<feature type="active site" description="For formimidoyltransferase activity" evidence="1">
    <location>
        <position position="89"/>
    </location>
</feature>
<feature type="binding site" evidence="3">
    <location>
        <begin position="178"/>
        <end position="187"/>
    </location>
    <ligand>
        <name>folate</name>
        <dbReference type="ChEBI" id="CHEBI:62501"/>
    </ligand>
</feature>
<accession>Q9SKT4</accession>
<accession>Q9C5G9</accession>
<sequence>MLREMLGCCKVYISEARNKTALEAIERALKPFPPAAIVNKFEDAAYGRVGYTVVSSLANGSSSSLKNAVFAMVKTALDTINLELHCGSHPRLGVVDHICFHPLSQTSIEQVSSVANSLAMDIGSILRVPTYLYGAAEKEQCTLDSIRRKLGYFKANREGHEWAGGFDLEMVPLKPDAGPQEVSKAKGVVAVGACGWVSNYNVPVMSNDLKAVRRIARKTSERGGGLASVQTMALVHGEGVIEVACNLLNPSQVGGDEVQGLIERLGREEGLLVGKGYYTDYTPDQIVERYMDLLNNS</sequence>
<comment type="function">
    <text evidence="4">Involved in the regulation of root growth (PubMed:35637390). May regulate sorting and/or transportation of trans-Golgi network (TGN) vesicles in root cap peripheral cells, thus influencing the extracellular secretion of mucilage components in the root cap (PubMed:35637390).</text>
</comment>
<comment type="catalytic activity">
    <reaction evidence="2">
        <text>(6S)-5-formyl-5,6,7,8-tetrahydrofolate + L-glutamate = N-formyl-L-glutamate + (6S)-5,6,7,8-tetrahydrofolate + H(+)</text>
        <dbReference type="Rhea" id="RHEA:23240"/>
        <dbReference type="ChEBI" id="CHEBI:15378"/>
        <dbReference type="ChEBI" id="CHEBI:17684"/>
        <dbReference type="ChEBI" id="CHEBI:29985"/>
        <dbReference type="ChEBI" id="CHEBI:57453"/>
        <dbReference type="ChEBI" id="CHEBI:57457"/>
        <dbReference type="EC" id="2.1.2.5"/>
    </reaction>
</comment>
<comment type="catalytic activity">
    <reaction evidence="2">
        <text>5-formimidoyltetrahydrofolate + L-glutamate = N-formimidoyl-L-glutamate + (6S)-5,6,7,8-tetrahydrofolate</text>
        <dbReference type="Rhea" id="RHEA:15097"/>
        <dbReference type="ChEBI" id="CHEBI:29985"/>
        <dbReference type="ChEBI" id="CHEBI:57453"/>
        <dbReference type="ChEBI" id="CHEBI:57456"/>
        <dbReference type="ChEBI" id="CHEBI:58928"/>
        <dbReference type="EC" id="2.1.2.5"/>
    </reaction>
</comment>
<comment type="pathway">
    <text evidence="2">One-carbon metabolism; tetrahydrofolate interconversion.</text>
</comment>
<comment type="subcellular location">
    <subcellularLocation>
        <location evidence="4">Golgi apparatus</location>
        <location evidence="4">trans-Golgi network</location>
    </subcellularLocation>
</comment>
<comment type="tissue specificity">
    <text evidence="4">Expressed constitutively in roots, stems, leaves and flowers.</text>
</comment>
<comment type="developmental stage">
    <text evidence="4">Observed in root cap cells.</text>
</comment>
<comment type="disruption phenotype">
    <text evidence="4">Delayed root growth when grown in high-concentration 1/2 MS agar culture medium; in these conditions, roots are wider and exhibit anomalies, such as swollen and irregular cells in the root transition and elongation zones (PubMed:35637390). Slower secretion in the root cap peripheral cells resulting in a significantly reduced monosaccharides content in the culture medium (PubMed:35637390).</text>
</comment>
<comment type="similarity">
    <text evidence="6">Belongs to the formiminotransferase family.</text>
</comment>
<name>FTCDL_ARATH</name>
<evidence type="ECO:0000250" key="1">
    <source>
        <dbReference type="UniProtKB" id="O88618"/>
    </source>
</evidence>
<evidence type="ECO:0000250" key="2">
    <source>
        <dbReference type="UniProtKB" id="Q9HI69"/>
    </source>
</evidence>
<evidence type="ECO:0000255" key="3"/>
<evidence type="ECO:0000269" key="4">
    <source>
    </source>
</evidence>
<evidence type="ECO:0000303" key="5">
    <source>
    </source>
</evidence>
<evidence type="ECO:0000305" key="6"/>
<evidence type="ECO:0000312" key="7">
    <source>
        <dbReference type="Araport" id="AT2G20830"/>
    </source>
</evidence>
<evidence type="ECO:0000312" key="8">
    <source>
        <dbReference type="EMBL" id="AAD20912.2"/>
    </source>
</evidence>
<keyword id="KW-0333">Golgi apparatus</keyword>
<keyword id="KW-1185">Reference proteome</keyword>
<keyword id="KW-0808">Transferase</keyword>
<reference key="1">
    <citation type="journal article" date="1999" name="Nature">
        <title>Sequence and analysis of chromosome 2 of the plant Arabidopsis thaliana.</title>
        <authorList>
            <person name="Lin X."/>
            <person name="Kaul S."/>
            <person name="Rounsley S.D."/>
            <person name="Shea T.P."/>
            <person name="Benito M.-I."/>
            <person name="Town C.D."/>
            <person name="Fujii C.Y."/>
            <person name="Mason T.M."/>
            <person name="Bowman C.L."/>
            <person name="Barnstead M.E."/>
            <person name="Feldblyum T.V."/>
            <person name="Buell C.R."/>
            <person name="Ketchum K.A."/>
            <person name="Lee J.J."/>
            <person name="Ronning C.M."/>
            <person name="Koo H.L."/>
            <person name="Moffat K.S."/>
            <person name="Cronin L.A."/>
            <person name="Shen M."/>
            <person name="Pai G."/>
            <person name="Van Aken S."/>
            <person name="Umayam L."/>
            <person name="Tallon L.J."/>
            <person name="Gill J.E."/>
            <person name="Adams M.D."/>
            <person name="Carrera A.J."/>
            <person name="Creasy T.H."/>
            <person name="Goodman H.M."/>
            <person name="Somerville C.R."/>
            <person name="Copenhaver G.P."/>
            <person name="Preuss D."/>
            <person name="Nierman W.C."/>
            <person name="White O."/>
            <person name="Eisen J.A."/>
            <person name="Salzberg S.L."/>
            <person name="Fraser C.M."/>
            <person name="Venter J.C."/>
        </authorList>
    </citation>
    <scope>NUCLEOTIDE SEQUENCE [LARGE SCALE GENOMIC DNA]</scope>
    <source>
        <strain>cv. Columbia</strain>
    </source>
</reference>
<reference key="2">
    <citation type="journal article" date="2017" name="Plant J.">
        <title>Araport11: a complete reannotation of the Arabidopsis thaliana reference genome.</title>
        <authorList>
            <person name="Cheng C.Y."/>
            <person name="Krishnakumar V."/>
            <person name="Chan A.P."/>
            <person name="Thibaud-Nissen F."/>
            <person name="Schobel S."/>
            <person name="Town C.D."/>
        </authorList>
    </citation>
    <scope>GENOME REANNOTATION</scope>
    <source>
        <strain>cv. Columbia</strain>
    </source>
</reference>
<reference key="3">
    <citation type="journal article" date="2003" name="Science">
        <title>Empirical analysis of transcriptional activity in the Arabidopsis genome.</title>
        <authorList>
            <person name="Yamada K."/>
            <person name="Lim J."/>
            <person name="Dale J.M."/>
            <person name="Chen H."/>
            <person name="Shinn P."/>
            <person name="Palm C.J."/>
            <person name="Southwick A.M."/>
            <person name="Wu H.C."/>
            <person name="Kim C.J."/>
            <person name="Nguyen M."/>
            <person name="Pham P.K."/>
            <person name="Cheuk R.F."/>
            <person name="Karlin-Newmann G."/>
            <person name="Liu S.X."/>
            <person name="Lam B."/>
            <person name="Sakano H."/>
            <person name="Wu T."/>
            <person name="Yu G."/>
            <person name="Miranda M."/>
            <person name="Quach H.L."/>
            <person name="Tripp M."/>
            <person name="Chang C.H."/>
            <person name="Lee J.M."/>
            <person name="Toriumi M.J."/>
            <person name="Chan M.M."/>
            <person name="Tang C.C."/>
            <person name="Onodera C.S."/>
            <person name="Deng J.M."/>
            <person name="Akiyama K."/>
            <person name="Ansari Y."/>
            <person name="Arakawa T."/>
            <person name="Banh J."/>
            <person name="Banno F."/>
            <person name="Bowser L."/>
            <person name="Brooks S.Y."/>
            <person name="Carninci P."/>
            <person name="Chao Q."/>
            <person name="Choy N."/>
            <person name="Enju A."/>
            <person name="Goldsmith A.D."/>
            <person name="Gurjal M."/>
            <person name="Hansen N.F."/>
            <person name="Hayashizaki Y."/>
            <person name="Johnson-Hopson C."/>
            <person name="Hsuan V.W."/>
            <person name="Iida K."/>
            <person name="Karnes M."/>
            <person name="Khan S."/>
            <person name="Koesema E."/>
            <person name="Ishida J."/>
            <person name="Jiang P.X."/>
            <person name="Jones T."/>
            <person name="Kawai J."/>
            <person name="Kamiya A."/>
            <person name="Meyers C."/>
            <person name="Nakajima M."/>
            <person name="Narusaka M."/>
            <person name="Seki M."/>
            <person name="Sakurai T."/>
            <person name="Satou M."/>
            <person name="Tamse R."/>
            <person name="Vaysberg M."/>
            <person name="Wallender E.K."/>
            <person name="Wong C."/>
            <person name="Yamamura Y."/>
            <person name="Yuan S."/>
            <person name="Shinozaki K."/>
            <person name="Davis R.W."/>
            <person name="Theologis A."/>
            <person name="Ecker J.R."/>
        </authorList>
    </citation>
    <scope>NUCLEOTIDE SEQUENCE [LARGE SCALE MRNA]</scope>
    <source>
        <strain>cv. Columbia</strain>
    </source>
</reference>
<reference key="4">
    <citation type="journal article" date="2022" name="Planta">
        <title>AtFTCD-L, a trans-Golgi network localized protein, modulates root growth of Arabidopsis in high-concentration agar culture medium.</title>
        <authorList>
            <person name="Cao Q."/>
            <person name="Zhang W."/>
            <person name="Liu X."/>
            <person name="Li Y."/>
        </authorList>
    </citation>
    <scope>FUNCTION</scope>
    <scope>DISRUPTION PHENOTYPE</scope>
    <scope>SUBCELLULAR LOCATION</scope>
    <scope>TISSUE SPECIFICITY</scope>
    <scope>DEVELOPMENTAL STAGE</scope>
    <source>
        <strain>cv. Wassilewskija</strain>
    </source>
</reference>